<organism>
    <name type="scientific">Mycoplasmopsis synoviae (strain 53)</name>
    <name type="common">Mycoplasma synoviae</name>
    <dbReference type="NCBI Taxonomy" id="262723"/>
    <lineage>
        <taxon>Bacteria</taxon>
        <taxon>Bacillati</taxon>
        <taxon>Mycoplasmatota</taxon>
        <taxon>Mycoplasmoidales</taxon>
        <taxon>Metamycoplasmataceae</taxon>
        <taxon>Mycoplasmopsis</taxon>
    </lineage>
</organism>
<evidence type="ECO:0000255" key="1">
    <source>
        <dbReference type="HAMAP-Rule" id="MF_00503"/>
    </source>
</evidence>
<evidence type="ECO:0000305" key="2"/>
<gene>
    <name evidence="1" type="primary">rplI</name>
    <name type="ordered locus">MS53_0426</name>
</gene>
<proteinExistence type="inferred from homology"/>
<feature type="chain" id="PRO_0000258472" description="Large ribosomal subunit protein bL9">
    <location>
        <begin position="1"/>
        <end position="152"/>
    </location>
</feature>
<sequence length="152" mass="17369">MKVILTKDSKYGKENAIIEVADGYAKNFLIPKGFAMAYSQDNLKIREQKLSDLSALEHEKRSKARELQKQIEELSLMFTLDAAIDKAQNLHVHGSVSTKELKTKLLEHKIKLHDHAIQHVHLNVEGTHVVEVSLYKDIKAKLRVNLHINVKK</sequence>
<protein>
    <recommendedName>
        <fullName evidence="1">Large ribosomal subunit protein bL9</fullName>
    </recommendedName>
    <alternativeName>
        <fullName evidence="2">50S ribosomal protein L9</fullName>
    </alternativeName>
</protein>
<accession>Q4A5Y3</accession>
<reference key="1">
    <citation type="journal article" date="2005" name="J. Bacteriol.">
        <title>Swine and poultry pathogens: the complete genome sequences of two strains of Mycoplasma hyopneumoniae and a strain of Mycoplasma synoviae.</title>
        <authorList>
            <person name="Vasconcelos A.T.R."/>
            <person name="Ferreira H.B."/>
            <person name="Bizarro C.V."/>
            <person name="Bonatto S.L."/>
            <person name="Carvalho M.O."/>
            <person name="Pinto P.M."/>
            <person name="Almeida D.F."/>
            <person name="Almeida L.G.P."/>
            <person name="Almeida R."/>
            <person name="Alves-Junior L."/>
            <person name="Assuncao E.N."/>
            <person name="Azevedo V.A.C."/>
            <person name="Bogo M.R."/>
            <person name="Brigido M.M."/>
            <person name="Brocchi M."/>
            <person name="Burity H.A."/>
            <person name="Camargo A.A."/>
            <person name="Camargo S.S."/>
            <person name="Carepo M.S."/>
            <person name="Carraro D.M."/>
            <person name="de Mattos Cascardo J.C."/>
            <person name="Castro L.A."/>
            <person name="Cavalcanti G."/>
            <person name="Chemale G."/>
            <person name="Collevatti R.G."/>
            <person name="Cunha C.W."/>
            <person name="Dallagiovanna B."/>
            <person name="Dambros B.P."/>
            <person name="Dellagostin O.A."/>
            <person name="Falcao C."/>
            <person name="Fantinatti-Garboggini F."/>
            <person name="Felipe M.S.S."/>
            <person name="Fiorentin L."/>
            <person name="Franco G.R."/>
            <person name="Freitas N.S.A."/>
            <person name="Frias D."/>
            <person name="Grangeiro T.B."/>
            <person name="Grisard E.C."/>
            <person name="Guimaraes C.T."/>
            <person name="Hungria M."/>
            <person name="Jardim S.N."/>
            <person name="Krieger M.A."/>
            <person name="Laurino J.P."/>
            <person name="Lima L.F.A."/>
            <person name="Lopes M.I."/>
            <person name="Loreto E.L.S."/>
            <person name="Madeira H.M.F."/>
            <person name="Manfio G.P."/>
            <person name="Maranhao A.Q."/>
            <person name="Martinkovics C.T."/>
            <person name="Medeiros S.R.B."/>
            <person name="Moreira M.A.M."/>
            <person name="Neiva M."/>
            <person name="Ramalho-Neto C.E."/>
            <person name="Nicolas M.F."/>
            <person name="Oliveira S.C."/>
            <person name="Paixao R.F.C."/>
            <person name="Pedrosa F.O."/>
            <person name="Pena S.D.J."/>
            <person name="Pereira M."/>
            <person name="Pereira-Ferrari L."/>
            <person name="Piffer I."/>
            <person name="Pinto L.S."/>
            <person name="Potrich D.P."/>
            <person name="Salim A.C.M."/>
            <person name="Santos F.R."/>
            <person name="Schmitt R."/>
            <person name="Schneider M.P.C."/>
            <person name="Schrank A."/>
            <person name="Schrank I.S."/>
            <person name="Schuck A.F."/>
            <person name="Seuanez H.N."/>
            <person name="Silva D.W."/>
            <person name="Silva R."/>
            <person name="Silva S.C."/>
            <person name="Soares C.M.A."/>
            <person name="Souza K.R.L."/>
            <person name="Souza R.C."/>
            <person name="Staats C.C."/>
            <person name="Steffens M.B.R."/>
            <person name="Teixeira S.M.R."/>
            <person name="Urmenyi T.P."/>
            <person name="Vainstein M.H."/>
            <person name="Zuccherato L.W."/>
            <person name="Simpson A.J.G."/>
            <person name="Zaha A."/>
        </authorList>
    </citation>
    <scope>NUCLEOTIDE SEQUENCE [LARGE SCALE GENOMIC DNA]</scope>
    <source>
        <strain>53</strain>
    </source>
</reference>
<comment type="function">
    <text evidence="1">Binds to the 23S rRNA.</text>
</comment>
<comment type="similarity">
    <text evidence="1">Belongs to the bacterial ribosomal protein bL9 family.</text>
</comment>
<name>RL9_MYCS5</name>
<keyword id="KW-1185">Reference proteome</keyword>
<keyword id="KW-0687">Ribonucleoprotein</keyword>
<keyword id="KW-0689">Ribosomal protein</keyword>
<keyword id="KW-0694">RNA-binding</keyword>
<keyword id="KW-0699">rRNA-binding</keyword>
<dbReference type="EMBL" id="AE017245">
    <property type="protein sequence ID" value="AAZ43838.1"/>
    <property type="molecule type" value="Genomic_DNA"/>
</dbReference>
<dbReference type="RefSeq" id="WP_011283569.1">
    <property type="nucleotide sequence ID" value="NC_007294.1"/>
</dbReference>
<dbReference type="SMR" id="Q4A5Y3"/>
<dbReference type="STRING" id="262723.MS53_0426"/>
<dbReference type="GeneID" id="93530209"/>
<dbReference type="KEGG" id="msy:MS53_0426"/>
<dbReference type="eggNOG" id="COG0359">
    <property type="taxonomic scope" value="Bacteria"/>
</dbReference>
<dbReference type="HOGENOM" id="CLU_078938_3_1_14"/>
<dbReference type="OrthoDB" id="9788336at2"/>
<dbReference type="Proteomes" id="UP000000549">
    <property type="component" value="Chromosome"/>
</dbReference>
<dbReference type="GO" id="GO:1990904">
    <property type="term" value="C:ribonucleoprotein complex"/>
    <property type="evidence" value="ECO:0007669"/>
    <property type="project" value="UniProtKB-KW"/>
</dbReference>
<dbReference type="GO" id="GO:0005840">
    <property type="term" value="C:ribosome"/>
    <property type="evidence" value="ECO:0007669"/>
    <property type="project" value="UniProtKB-KW"/>
</dbReference>
<dbReference type="GO" id="GO:0019843">
    <property type="term" value="F:rRNA binding"/>
    <property type="evidence" value="ECO:0007669"/>
    <property type="project" value="UniProtKB-UniRule"/>
</dbReference>
<dbReference type="GO" id="GO:0003735">
    <property type="term" value="F:structural constituent of ribosome"/>
    <property type="evidence" value="ECO:0007669"/>
    <property type="project" value="InterPro"/>
</dbReference>
<dbReference type="GO" id="GO:0006412">
    <property type="term" value="P:translation"/>
    <property type="evidence" value="ECO:0007669"/>
    <property type="project" value="UniProtKB-UniRule"/>
</dbReference>
<dbReference type="Gene3D" id="3.10.430.100">
    <property type="entry name" value="Ribosomal protein L9, C-terminal domain"/>
    <property type="match status" value="1"/>
</dbReference>
<dbReference type="Gene3D" id="3.40.5.10">
    <property type="entry name" value="Ribosomal protein L9, N-terminal domain"/>
    <property type="match status" value="1"/>
</dbReference>
<dbReference type="HAMAP" id="MF_00503">
    <property type="entry name" value="Ribosomal_bL9"/>
    <property type="match status" value="1"/>
</dbReference>
<dbReference type="InterPro" id="IPR000244">
    <property type="entry name" value="Ribosomal_bL9"/>
</dbReference>
<dbReference type="InterPro" id="IPR009027">
    <property type="entry name" value="Ribosomal_bL9/RNase_H1_N"/>
</dbReference>
<dbReference type="InterPro" id="IPR020594">
    <property type="entry name" value="Ribosomal_bL9_bac/chp"/>
</dbReference>
<dbReference type="InterPro" id="IPR020069">
    <property type="entry name" value="Ribosomal_bL9_C"/>
</dbReference>
<dbReference type="InterPro" id="IPR036791">
    <property type="entry name" value="Ribosomal_bL9_C_sf"/>
</dbReference>
<dbReference type="InterPro" id="IPR020070">
    <property type="entry name" value="Ribosomal_bL9_N"/>
</dbReference>
<dbReference type="InterPro" id="IPR036935">
    <property type="entry name" value="Ribosomal_bL9_N_sf"/>
</dbReference>
<dbReference type="NCBIfam" id="TIGR00158">
    <property type="entry name" value="L9"/>
    <property type="match status" value="1"/>
</dbReference>
<dbReference type="PANTHER" id="PTHR21368">
    <property type="entry name" value="50S RIBOSOMAL PROTEIN L9"/>
    <property type="match status" value="1"/>
</dbReference>
<dbReference type="Pfam" id="PF03948">
    <property type="entry name" value="Ribosomal_L9_C"/>
    <property type="match status" value="1"/>
</dbReference>
<dbReference type="Pfam" id="PF01281">
    <property type="entry name" value="Ribosomal_L9_N"/>
    <property type="match status" value="1"/>
</dbReference>
<dbReference type="SUPFAM" id="SSF55658">
    <property type="entry name" value="L9 N-domain-like"/>
    <property type="match status" value="1"/>
</dbReference>
<dbReference type="SUPFAM" id="SSF55653">
    <property type="entry name" value="Ribosomal protein L9 C-domain"/>
    <property type="match status" value="1"/>
</dbReference>
<dbReference type="PROSITE" id="PS00651">
    <property type="entry name" value="RIBOSOMAL_L9"/>
    <property type="match status" value="1"/>
</dbReference>